<proteinExistence type="inferred from homology"/>
<dbReference type="EMBL" id="M33139">
    <property type="protein sequence ID" value="AAA35336.1"/>
    <property type="molecule type" value="Genomic_DNA"/>
</dbReference>
<dbReference type="EMBL" id="CU329671">
    <property type="protein sequence ID" value="CAA17793.1"/>
    <property type="molecule type" value="Genomic_DNA"/>
</dbReference>
<dbReference type="PIR" id="C34715">
    <property type="entry name" value="R6BYP3"/>
</dbReference>
<dbReference type="RefSeq" id="NP_596671.1">
    <property type="nucleotide sequence ID" value="NM_001022593.2"/>
</dbReference>
<dbReference type="SMR" id="P17477"/>
<dbReference type="BioGRID" id="276830">
    <property type="interactions" value="5"/>
</dbReference>
<dbReference type="FunCoup" id="P17477">
    <property type="interactions" value="336"/>
</dbReference>
<dbReference type="STRING" id="284812.P17477"/>
<dbReference type="iPTMnet" id="P17477"/>
<dbReference type="PaxDb" id="4896-SPBC3B9.13c.1"/>
<dbReference type="EnsemblFungi" id="SPBC3B9.13c.1">
    <property type="protein sequence ID" value="SPBC3B9.13c.1:pep"/>
    <property type="gene ID" value="SPBC3B9.13c"/>
</dbReference>
<dbReference type="GeneID" id="2540299"/>
<dbReference type="KEGG" id="spo:2540299"/>
<dbReference type="PomBase" id="SPBC3B9.13c">
    <property type="gene designation" value="rpp102"/>
</dbReference>
<dbReference type="VEuPathDB" id="FungiDB:SPBC3B9.13c"/>
<dbReference type="eggNOG" id="KOG1762">
    <property type="taxonomic scope" value="Eukaryota"/>
</dbReference>
<dbReference type="HOGENOM" id="CLU_114656_1_0_1"/>
<dbReference type="InParanoid" id="P17477"/>
<dbReference type="OMA" id="REELMCV"/>
<dbReference type="PhylomeDB" id="P17477"/>
<dbReference type="PRO" id="PR:P17477"/>
<dbReference type="Proteomes" id="UP000002485">
    <property type="component" value="Chromosome II"/>
</dbReference>
<dbReference type="GO" id="GO:0005829">
    <property type="term" value="C:cytosol"/>
    <property type="evidence" value="ECO:0007005"/>
    <property type="project" value="PomBase"/>
</dbReference>
<dbReference type="GO" id="GO:0022625">
    <property type="term" value="C:cytosolic large ribosomal subunit"/>
    <property type="evidence" value="ECO:0000318"/>
    <property type="project" value="GO_Central"/>
</dbReference>
<dbReference type="GO" id="GO:0030295">
    <property type="term" value="F:protein kinase activator activity"/>
    <property type="evidence" value="ECO:0000318"/>
    <property type="project" value="GO_Central"/>
</dbReference>
<dbReference type="GO" id="GO:0043021">
    <property type="term" value="F:ribonucleoprotein complex binding"/>
    <property type="evidence" value="ECO:0000318"/>
    <property type="project" value="GO_Central"/>
</dbReference>
<dbReference type="GO" id="GO:0003735">
    <property type="term" value="F:structural constituent of ribosome"/>
    <property type="evidence" value="ECO:0000318"/>
    <property type="project" value="GO_Central"/>
</dbReference>
<dbReference type="GO" id="GO:0002181">
    <property type="term" value="P:cytoplasmic translation"/>
    <property type="evidence" value="ECO:0000318"/>
    <property type="project" value="GO_Central"/>
</dbReference>
<dbReference type="GO" id="GO:0002182">
    <property type="term" value="P:cytoplasmic translational elongation"/>
    <property type="evidence" value="ECO:0000266"/>
    <property type="project" value="PomBase"/>
</dbReference>
<dbReference type="CDD" id="cd05831">
    <property type="entry name" value="Ribosomal_P1"/>
    <property type="match status" value="1"/>
</dbReference>
<dbReference type="FunFam" id="1.10.10.1410:FF:000001">
    <property type="entry name" value="60S acidic ribosomal protein P1"/>
    <property type="match status" value="1"/>
</dbReference>
<dbReference type="Gene3D" id="1.10.10.1410">
    <property type="match status" value="1"/>
</dbReference>
<dbReference type="HAMAP" id="MF_01478">
    <property type="entry name" value="Ribosomal_L12_arch"/>
    <property type="match status" value="1"/>
</dbReference>
<dbReference type="InterPro" id="IPR038716">
    <property type="entry name" value="P1/P2_N_sf"/>
</dbReference>
<dbReference type="InterPro" id="IPR027534">
    <property type="entry name" value="Ribosomal_P1/P2"/>
</dbReference>
<dbReference type="PANTHER" id="PTHR45696">
    <property type="entry name" value="60S ACIDIC RIBOSOMAL PROTEIN P1"/>
    <property type="match status" value="1"/>
</dbReference>
<dbReference type="PANTHER" id="PTHR45696:SF10">
    <property type="entry name" value="LARGE RIBOSOMAL SUBUNIT PROTEIN P1"/>
    <property type="match status" value="1"/>
</dbReference>
<dbReference type="Pfam" id="PF00428">
    <property type="entry name" value="Ribosomal_60s"/>
    <property type="match status" value="1"/>
</dbReference>
<protein>
    <recommendedName>
        <fullName evidence="4">Large ribosomal subunit protein P1B</fullName>
    </recommendedName>
    <alternativeName>
        <fullName>60S acidic ribosomal protein P1-alpha 3</fullName>
        <shortName>A3</shortName>
    </alternativeName>
</protein>
<gene>
    <name type="primary">rpp102</name>
    <name type="synonym">rpa3</name>
    <name type="ORF">SPBC3B9.13c</name>
</gene>
<evidence type="ECO:0000250" key="1">
    <source>
        <dbReference type="UniProtKB" id="P10622"/>
    </source>
</evidence>
<evidence type="ECO:0000256" key="2">
    <source>
        <dbReference type="SAM" id="MobiDB-lite"/>
    </source>
</evidence>
<evidence type="ECO:0000269" key="3">
    <source>
    </source>
</evidence>
<evidence type="ECO:0000305" key="4"/>
<organism>
    <name type="scientific">Schizosaccharomyces pombe (strain 972 / ATCC 24843)</name>
    <name type="common">Fission yeast</name>
    <dbReference type="NCBI Taxonomy" id="284812"/>
    <lineage>
        <taxon>Eukaryota</taxon>
        <taxon>Fungi</taxon>
        <taxon>Dikarya</taxon>
        <taxon>Ascomycota</taxon>
        <taxon>Taphrinomycotina</taxon>
        <taxon>Schizosaccharomycetes</taxon>
        <taxon>Schizosaccharomycetales</taxon>
        <taxon>Schizosaccharomycetaceae</taxon>
        <taxon>Schizosaccharomyces</taxon>
    </lineage>
</organism>
<feature type="chain" id="PRO_0000157708" description="Large ribosomal subunit protein P1B">
    <location>
        <begin position="1"/>
        <end position="110"/>
    </location>
</feature>
<feature type="region of interest" description="Disordered" evidence="2">
    <location>
        <begin position="69"/>
        <end position="110"/>
    </location>
</feature>
<feature type="compositionally biased region" description="Low complexity" evidence="2">
    <location>
        <begin position="69"/>
        <end position="85"/>
    </location>
</feature>
<feature type="compositionally biased region" description="Acidic residues" evidence="2">
    <location>
        <begin position="95"/>
        <end position="104"/>
    </location>
</feature>
<comment type="function">
    <text evidence="1">Component of the ribosome, a large ribonucleoprotein complex responsible for the synthesis of proteins in the cell. The small ribosomal subunit (SSU) binds messenger RNAs (mRNAs) and translates the encoded message by selecting cognate aminoacyl-transfer RNA (tRNA) molecules. The large subunit (LSU) contains the ribosomal catalytic site termed the peptidyl transferase center (PTC), which catalyzes the formation of peptide bonds, thereby polymerizing the amino acids delivered by tRNAs into a polypeptide chain. The nascent polypeptides leave the ribosome through a tunnel in the LSU and interact with protein factors that function in enzymatic processing, targeting, and the membrane insertion of nascent chains at the exit of the ribosomal tunnel.</text>
</comment>
<comment type="subunit">
    <text evidence="1">Component of the large ribosomal subunit (LSU). Mature yeast ribosomes consist of a small (40S) and a large (60S) subunit. The 40S small subunit contains 1 molecule of ribosomal RNA (18S rRNA) and at least 33 different proteins. The large 60S subunit contains 3 rRNA molecules (25S, 5.8S and 5S rRNA) and at least 46 different proteins. The acidic ribosomal P-proteins form the stalk structure of the 60S subunit. They are organized as a pentameric complex in which uL10/P0 interacts with 2 heterodimers of P1 and P2 proteins.</text>
</comment>
<comment type="subcellular location">
    <subcellularLocation>
        <location evidence="3">Cytoplasm</location>
    </subcellularLocation>
</comment>
<comment type="miscellaneous">
    <text>Yeasts contain 4 individual small ribosomal A proteins (RPA) which can be classified into two couples of similar but not identical sequences. Each couple is distinctly related to one of the two A proteins present in multicellular organisms.</text>
</comment>
<comment type="miscellaneous">
    <text>Rpa3 and rpa4 are essential for cell survival, whereas rpa1 and rpa2 are not.</text>
</comment>
<comment type="similarity">
    <text evidence="4">Belongs to the eukaryotic ribosomal protein P1/P2 family.</text>
</comment>
<keyword id="KW-0963">Cytoplasm</keyword>
<keyword id="KW-0597">Phosphoprotein</keyword>
<keyword id="KW-1185">Reference proteome</keyword>
<keyword id="KW-0687">Ribonucleoprotein</keyword>
<keyword id="KW-0689">Ribosomal protein</keyword>
<sequence length="110" mass="11171">MSASELATSYSALILADEGIEITSDKLLSLTKAANVDVEPIWATIFAKALEGKDLKELLLNIGSAAAAPAAGGAGAPAAAAGGEAAAEEQKEEAKEEEESDEDMGFGLFD</sequence>
<reference key="1">
    <citation type="journal article" date="1990" name="Mol. Cell. Biol.">
        <title>A gene family for acidic ribosomal proteins in Schizosaccharomyces pombe: two essential and two nonessential genes.</title>
        <authorList>
            <person name="Beltrame M."/>
            <person name="Bianchi M.E."/>
        </authorList>
    </citation>
    <scope>NUCLEOTIDE SEQUENCE [GENOMIC DNA]</scope>
</reference>
<reference key="2">
    <citation type="journal article" date="2002" name="Nature">
        <title>The genome sequence of Schizosaccharomyces pombe.</title>
        <authorList>
            <person name="Wood V."/>
            <person name="Gwilliam R."/>
            <person name="Rajandream M.A."/>
            <person name="Lyne M.H."/>
            <person name="Lyne R."/>
            <person name="Stewart A."/>
            <person name="Sgouros J.G."/>
            <person name="Peat N."/>
            <person name="Hayles J."/>
            <person name="Baker S.G."/>
            <person name="Basham D."/>
            <person name="Bowman S."/>
            <person name="Brooks K."/>
            <person name="Brown D."/>
            <person name="Brown S."/>
            <person name="Chillingworth T."/>
            <person name="Churcher C.M."/>
            <person name="Collins M."/>
            <person name="Connor R."/>
            <person name="Cronin A."/>
            <person name="Davis P."/>
            <person name="Feltwell T."/>
            <person name="Fraser A."/>
            <person name="Gentles S."/>
            <person name="Goble A."/>
            <person name="Hamlin N."/>
            <person name="Harris D.E."/>
            <person name="Hidalgo J."/>
            <person name="Hodgson G."/>
            <person name="Holroyd S."/>
            <person name="Hornsby T."/>
            <person name="Howarth S."/>
            <person name="Huckle E.J."/>
            <person name="Hunt S."/>
            <person name="Jagels K."/>
            <person name="James K.D."/>
            <person name="Jones L."/>
            <person name="Jones M."/>
            <person name="Leather S."/>
            <person name="McDonald S."/>
            <person name="McLean J."/>
            <person name="Mooney P."/>
            <person name="Moule S."/>
            <person name="Mungall K.L."/>
            <person name="Murphy L.D."/>
            <person name="Niblett D."/>
            <person name="Odell C."/>
            <person name="Oliver K."/>
            <person name="O'Neil S."/>
            <person name="Pearson D."/>
            <person name="Quail M.A."/>
            <person name="Rabbinowitsch E."/>
            <person name="Rutherford K.M."/>
            <person name="Rutter S."/>
            <person name="Saunders D."/>
            <person name="Seeger K."/>
            <person name="Sharp S."/>
            <person name="Skelton J."/>
            <person name="Simmonds M.N."/>
            <person name="Squares R."/>
            <person name="Squares S."/>
            <person name="Stevens K."/>
            <person name="Taylor K."/>
            <person name="Taylor R.G."/>
            <person name="Tivey A."/>
            <person name="Walsh S.V."/>
            <person name="Warren T."/>
            <person name="Whitehead S."/>
            <person name="Woodward J.R."/>
            <person name="Volckaert G."/>
            <person name="Aert R."/>
            <person name="Robben J."/>
            <person name="Grymonprez B."/>
            <person name="Weltjens I."/>
            <person name="Vanstreels E."/>
            <person name="Rieger M."/>
            <person name="Schaefer M."/>
            <person name="Mueller-Auer S."/>
            <person name="Gabel C."/>
            <person name="Fuchs M."/>
            <person name="Duesterhoeft A."/>
            <person name="Fritzc C."/>
            <person name="Holzer E."/>
            <person name="Moestl D."/>
            <person name="Hilbert H."/>
            <person name="Borzym K."/>
            <person name="Langer I."/>
            <person name="Beck A."/>
            <person name="Lehrach H."/>
            <person name="Reinhardt R."/>
            <person name="Pohl T.M."/>
            <person name="Eger P."/>
            <person name="Zimmermann W."/>
            <person name="Wedler H."/>
            <person name="Wambutt R."/>
            <person name="Purnelle B."/>
            <person name="Goffeau A."/>
            <person name="Cadieu E."/>
            <person name="Dreano S."/>
            <person name="Gloux S."/>
            <person name="Lelaure V."/>
            <person name="Mottier S."/>
            <person name="Galibert F."/>
            <person name="Aves S.J."/>
            <person name="Xiang Z."/>
            <person name="Hunt C."/>
            <person name="Moore K."/>
            <person name="Hurst S.M."/>
            <person name="Lucas M."/>
            <person name="Rochet M."/>
            <person name="Gaillardin C."/>
            <person name="Tallada V.A."/>
            <person name="Garzon A."/>
            <person name="Thode G."/>
            <person name="Daga R.R."/>
            <person name="Cruzado L."/>
            <person name="Jimenez J."/>
            <person name="Sanchez M."/>
            <person name="del Rey F."/>
            <person name="Benito J."/>
            <person name="Dominguez A."/>
            <person name="Revuelta J.L."/>
            <person name="Moreno S."/>
            <person name="Armstrong J."/>
            <person name="Forsburg S.L."/>
            <person name="Cerutti L."/>
            <person name="Lowe T."/>
            <person name="McCombie W.R."/>
            <person name="Paulsen I."/>
            <person name="Potashkin J."/>
            <person name="Shpakovski G.V."/>
            <person name="Ussery D."/>
            <person name="Barrell B.G."/>
            <person name="Nurse P."/>
        </authorList>
    </citation>
    <scope>NUCLEOTIDE SEQUENCE [LARGE SCALE GENOMIC DNA]</scope>
    <source>
        <strain>972 / ATCC 24843</strain>
    </source>
</reference>
<reference key="3">
    <citation type="journal article" date="2006" name="Nat. Biotechnol.">
        <title>ORFeome cloning and global analysis of protein localization in the fission yeast Schizosaccharomyces pombe.</title>
        <authorList>
            <person name="Matsuyama A."/>
            <person name="Arai R."/>
            <person name="Yashiroda Y."/>
            <person name="Shirai A."/>
            <person name="Kamata A."/>
            <person name="Sekido S."/>
            <person name="Kobayashi Y."/>
            <person name="Hashimoto A."/>
            <person name="Hamamoto M."/>
            <person name="Hiraoka Y."/>
            <person name="Horinouchi S."/>
            <person name="Yoshida M."/>
        </authorList>
    </citation>
    <scope>SUBCELLULAR LOCATION [LARGE SCALE ANALYSIS]</scope>
</reference>
<name>RLA3_SCHPO</name>
<accession>P17477</accession>